<organism>
    <name type="scientific">Saccharophagus degradans (strain 2-40 / ATCC 43961 / DSM 17024)</name>
    <dbReference type="NCBI Taxonomy" id="203122"/>
    <lineage>
        <taxon>Bacteria</taxon>
        <taxon>Pseudomonadati</taxon>
        <taxon>Pseudomonadota</taxon>
        <taxon>Gammaproteobacteria</taxon>
        <taxon>Cellvibrionales</taxon>
        <taxon>Cellvibrionaceae</taxon>
        <taxon>Saccharophagus</taxon>
    </lineage>
</organism>
<dbReference type="EC" id="2.1.1.182" evidence="1"/>
<dbReference type="EMBL" id="CP000282">
    <property type="protein sequence ID" value="ABD79999.1"/>
    <property type="molecule type" value="Genomic_DNA"/>
</dbReference>
<dbReference type="RefSeq" id="WP_011467220.1">
    <property type="nucleotide sequence ID" value="NC_007912.1"/>
</dbReference>
<dbReference type="SMR" id="Q21MT0"/>
<dbReference type="STRING" id="203122.Sde_0737"/>
<dbReference type="GeneID" id="98612422"/>
<dbReference type="KEGG" id="sde:Sde_0737"/>
<dbReference type="eggNOG" id="COG0030">
    <property type="taxonomic scope" value="Bacteria"/>
</dbReference>
<dbReference type="HOGENOM" id="CLU_041220_0_1_6"/>
<dbReference type="OrthoDB" id="9814755at2"/>
<dbReference type="Proteomes" id="UP000001947">
    <property type="component" value="Chromosome"/>
</dbReference>
<dbReference type="GO" id="GO:0005829">
    <property type="term" value="C:cytosol"/>
    <property type="evidence" value="ECO:0007669"/>
    <property type="project" value="TreeGrafter"/>
</dbReference>
<dbReference type="GO" id="GO:0052908">
    <property type="term" value="F:16S rRNA (adenine(1518)-N(6)/adenine(1519)-N(6))-dimethyltransferase activity"/>
    <property type="evidence" value="ECO:0007669"/>
    <property type="project" value="UniProtKB-EC"/>
</dbReference>
<dbReference type="GO" id="GO:0003723">
    <property type="term" value="F:RNA binding"/>
    <property type="evidence" value="ECO:0007669"/>
    <property type="project" value="UniProtKB-KW"/>
</dbReference>
<dbReference type="FunFam" id="1.10.8.100:FF:000001">
    <property type="entry name" value="Ribosomal RNA small subunit methyltransferase A"/>
    <property type="match status" value="1"/>
</dbReference>
<dbReference type="Gene3D" id="1.10.8.100">
    <property type="entry name" value="Ribosomal RNA adenine dimethylase-like, domain 2"/>
    <property type="match status" value="1"/>
</dbReference>
<dbReference type="Gene3D" id="3.40.50.150">
    <property type="entry name" value="Vaccinia Virus protein VP39"/>
    <property type="match status" value="1"/>
</dbReference>
<dbReference type="HAMAP" id="MF_00607">
    <property type="entry name" value="16SrRNA_methyltr_A"/>
    <property type="match status" value="1"/>
</dbReference>
<dbReference type="InterPro" id="IPR001737">
    <property type="entry name" value="KsgA/Erm"/>
</dbReference>
<dbReference type="InterPro" id="IPR023165">
    <property type="entry name" value="rRNA_Ade_diMease-like_C"/>
</dbReference>
<dbReference type="InterPro" id="IPR020596">
    <property type="entry name" value="rRNA_Ade_Mease_Trfase_CS"/>
</dbReference>
<dbReference type="InterPro" id="IPR020598">
    <property type="entry name" value="rRNA_Ade_methylase_Trfase_N"/>
</dbReference>
<dbReference type="InterPro" id="IPR011530">
    <property type="entry name" value="rRNA_adenine_dimethylase"/>
</dbReference>
<dbReference type="InterPro" id="IPR029063">
    <property type="entry name" value="SAM-dependent_MTases_sf"/>
</dbReference>
<dbReference type="NCBIfam" id="TIGR00755">
    <property type="entry name" value="ksgA"/>
    <property type="match status" value="1"/>
</dbReference>
<dbReference type="PANTHER" id="PTHR11727">
    <property type="entry name" value="DIMETHYLADENOSINE TRANSFERASE"/>
    <property type="match status" value="1"/>
</dbReference>
<dbReference type="PANTHER" id="PTHR11727:SF7">
    <property type="entry name" value="DIMETHYLADENOSINE TRANSFERASE-RELATED"/>
    <property type="match status" value="1"/>
</dbReference>
<dbReference type="Pfam" id="PF00398">
    <property type="entry name" value="RrnaAD"/>
    <property type="match status" value="1"/>
</dbReference>
<dbReference type="SMART" id="SM00650">
    <property type="entry name" value="rADc"/>
    <property type="match status" value="1"/>
</dbReference>
<dbReference type="SUPFAM" id="SSF53335">
    <property type="entry name" value="S-adenosyl-L-methionine-dependent methyltransferases"/>
    <property type="match status" value="1"/>
</dbReference>
<dbReference type="PROSITE" id="PS01131">
    <property type="entry name" value="RRNA_A_DIMETH"/>
    <property type="match status" value="1"/>
</dbReference>
<dbReference type="PROSITE" id="PS51689">
    <property type="entry name" value="SAM_RNA_A_N6_MT"/>
    <property type="match status" value="1"/>
</dbReference>
<evidence type="ECO:0000255" key="1">
    <source>
        <dbReference type="HAMAP-Rule" id="MF_00607"/>
    </source>
</evidence>
<feature type="chain" id="PRO_0000257342" description="Ribosomal RNA small subunit methyltransferase A">
    <location>
        <begin position="1"/>
        <end position="268"/>
    </location>
</feature>
<feature type="binding site" evidence="1">
    <location>
        <position position="21"/>
    </location>
    <ligand>
        <name>S-adenosyl-L-methionine</name>
        <dbReference type="ChEBI" id="CHEBI:59789"/>
    </ligand>
</feature>
<feature type="binding site" evidence="1">
    <location>
        <position position="23"/>
    </location>
    <ligand>
        <name>S-adenosyl-L-methionine</name>
        <dbReference type="ChEBI" id="CHEBI:59789"/>
    </ligand>
</feature>
<feature type="binding site" evidence="1">
    <location>
        <position position="48"/>
    </location>
    <ligand>
        <name>S-adenosyl-L-methionine</name>
        <dbReference type="ChEBI" id="CHEBI:59789"/>
    </ligand>
</feature>
<feature type="binding site" evidence="1">
    <location>
        <position position="69"/>
    </location>
    <ligand>
        <name>S-adenosyl-L-methionine</name>
        <dbReference type="ChEBI" id="CHEBI:59789"/>
    </ligand>
</feature>
<feature type="binding site" evidence="1">
    <location>
        <position position="94"/>
    </location>
    <ligand>
        <name>S-adenosyl-L-methionine</name>
        <dbReference type="ChEBI" id="CHEBI:59789"/>
    </ligand>
</feature>
<feature type="binding site" evidence="1">
    <location>
        <position position="115"/>
    </location>
    <ligand>
        <name>S-adenosyl-L-methionine</name>
        <dbReference type="ChEBI" id="CHEBI:59789"/>
    </ligand>
</feature>
<keyword id="KW-0963">Cytoplasm</keyword>
<keyword id="KW-0489">Methyltransferase</keyword>
<keyword id="KW-1185">Reference proteome</keyword>
<keyword id="KW-0694">RNA-binding</keyword>
<keyword id="KW-0698">rRNA processing</keyword>
<keyword id="KW-0949">S-adenosyl-L-methionine</keyword>
<keyword id="KW-0808">Transferase</keyword>
<gene>
    <name evidence="1" type="primary">rsmA</name>
    <name evidence="1" type="synonym">ksgA</name>
    <name type="ordered locus">Sde_0737</name>
</gene>
<sequence length="268" mass="30309">MKNKNTDPMQGHRARKRFGQNFLEDQGIINAIVRSIGPKASDNLVEIGPGKGAITAQLIESCPSMQVVELDRDLIPILLAQFAIYNDFRIHQTDALKFDFGQLATPERPLRVVGNLPYNISTPLIFHLLSFGELIADMHFMLQKEVVLRLAAGPGDKNYGRLSVMTQYVCQVENLFEVPPECFNPRPKVDSAIVRLTPYRTQPFVAAHPDKLAKLVKTAFAQRRKTLRNNLKNLDEELDLEALDIDLTRRAESLSLEEYVNLSNTLWP</sequence>
<comment type="function">
    <text evidence="1">Specifically dimethylates two adjacent adenosines (A1518 and A1519) in the loop of a conserved hairpin near the 3'-end of 16S rRNA in the 30S particle. May play a critical role in biogenesis of 30S subunits.</text>
</comment>
<comment type="catalytic activity">
    <reaction evidence="1">
        <text>adenosine(1518)/adenosine(1519) in 16S rRNA + 4 S-adenosyl-L-methionine = N(6)-dimethyladenosine(1518)/N(6)-dimethyladenosine(1519) in 16S rRNA + 4 S-adenosyl-L-homocysteine + 4 H(+)</text>
        <dbReference type="Rhea" id="RHEA:19609"/>
        <dbReference type="Rhea" id="RHEA-COMP:10232"/>
        <dbReference type="Rhea" id="RHEA-COMP:10233"/>
        <dbReference type="ChEBI" id="CHEBI:15378"/>
        <dbReference type="ChEBI" id="CHEBI:57856"/>
        <dbReference type="ChEBI" id="CHEBI:59789"/>
        <dbReference type="ChEBI" id="CHEBI:74411"/>
        <dbReference type="ChEBI" id="CHEBI:74493"/>
        <dbReference type="EC" id="2.1.1.182"/>
    </reaction>
</comment>
<comment type="subcellular location">
    <subcellularLocation>
        <location evidence="1">Cytoplasm</location>
    </subcellularLocation>
</comment>
<comment type="similarity">
    <text evidence="1">Belongs to the class I-like SAM-binding methyltransferase superfamily. rRNA adenine N(6)-methyltransferase family. RsmA subfamily.</text>
</comment>
<protein>
    <recommendedName>
        <fullName evidence="1">Ribosomal RNA small subunit methyltransferase A</fullName>
        <ecNumber evidence="1">2.1.1.182</ecNumber>
    </recommendedName>
    <alternativeName>
        <fullName evidence="1">16S rRNA (adenine(1518)-N(6)/adenine(1519)-N(6))-dimethyltransferase</fullName>
    </alternativeName>
    <alternativeName>
        <fullName evidence="1">16S rRNA dimethyladenosine transferase</fullName>
    </alternativeName>
    <alternativeName>
        <fullName evidence="1">16S rRNA dimethylase</fullName>
    </alternativeName>
    <alternativeName>
        <fullName evidence="1">S-adenosylmethionine-6-N', N'-adenosyl(rRNA) dimethyltransferase</fullName>
    </alternativeName>
</protein>
<name>RSMA_SACD2</name>
<reference key="1">
    <citation type="journal article" date="2008" name="PLoS Genet.">
        <title>Complete genome sequence of the complex carbohydrate-degrading marine bacterium, Saccharophagus degradans strain 2-40 T.</title>
        <authorList>
            <person name="Weiner R.M."/>
            <person name="Taylor L.E. II"/>
            <person name="Henrissat B."/>
            <person name="Hauser L."/>
            <person name="Land M."/>
            <person name="Coutinho P.M."/>
            <person name="Rancurel C."/>
            <person name="Saunders E.H."/>
            <person name="Longmire A.G."/>
            <person name="Zhang H."/>
            <person name="Bayer E.A."/>
            <person name="Gilbert H.J."/>
            <person name="Larimer F."/>
            <person name="Zhulin I.B."/>
            <person name="Ekborg N.A."/>
            <person name="Lamed R."/>
            <person name="Richardson P.M."/>
            <person name="Borovok I."/>
            <person name="Hutcheson S."/>
        </authorList>
    </citation>
    <scope>NUCLEOTIDE SEQUENCE [LARGE SCALE GENOMIC DNA]</scope>
    <source>
        <strain>2-40 / ATCC 43961 / DSM 17024</strain>
    </source>
</reference>
<proteinExistence type="inferred from homology"/>
<accession>Q21MT0</accession>